<evidence type="ECO:0000250" key="1"/>
<evidence type="ECO:0000256" key="2">
    <source>
        <dbReference type="SAM" id="MobiDB-lite"/>
    </source>
</evidence>
<evidence type="ECO:0000305" key="3"/>
<proteinExistence type="evidence at transcript level"/>
<protein>
    <recommendedName>
        <fullName>Oxygen-evolving enhancer protein 2, chloroplastic</fullName>
        <shortName>OEE2</shortName>
    </recommendedName>
    <alternativeName>
        <fullName>23 kDa subunit of oxygen evolving system of photosystem II</fullName>
    </alternativeName>
    <alternativeName>
        <fullName>23 kDa thylakoid membrane protein</fullName>
    </alternativeName>
    <alternativeName>
        <fullName>OEC 23 kDa subunit</fullName>
    </alternativeName>
</protein>
<accession>Q40407</accession>
<organism>
    <name type="scientific">Narcissus pseudonarcissus</name>
    <name type="common">Daffodil</name>
    <dbReference type="NCBI Taxonomy" id="39639"/>
    <lineage>
        <taxon>Eukaryota</taxon>
        <taxon>Viridiplantae</taxon>
        <taxon>Streptophyta</taxon>
        <taxon>Embryophyta</taxon>
        <taxon>Tracheophyta</taxon>
        <taxon>Spermatophyta</taxon>
        <taxon>Magnoliopsida</taxon>
        <taxon>Liliopsida</taxon>
        <taxon>Asparagales</taxon>
        <taxon>Amaryllidaceae</taxon>
        <taxon>Amaryllidoideae</taxon>
        <taxon>Narcissus</taxon>
    </lineage>
</organism>
<reference key="1">
    <citation type="journal article" date="1995" name="Eur. J. Biochem.">
        <title>Carotene desaturation is linked to a respiratory redox pathway in Narcissus pseudonarcissus chromoplast membranes. Involvement of a 23-kDa oxygen-evolving-complex-like protein.</title>
        <authorList>
            <person name="Nievelstein V."/>
            <person name="Vandekerckhove J."/>
            <person name="Tadros M.H."/>
            <person name="Lintig J.V."/>
            <person name="Nitschke W."/>
            <person name="Beyer P."/>
        </authorList>
    </citation>
    <scope>NUCLEOTIDE SEQUENCE [MRNA]</scope>
    <source>
        <tissue>Paracorolla</tissue>
    </source>
</reference>
<name>PSBP_NARPS</name>
<dbReference type="EMBL" id="X78816">
    <property type="protein sequence ID" value="CAA55393.1"/>
    <property type="molecule type" value="mRNA"/>
</dbReference>
<dbReference type="PIR" id="S63532">
    <property type="entry name" value="S63532"/>
</dbReference>
<dbReference type="SMR" id="Q40407"/>
<dbReference type="GO" id="GO:0009535">
    <property type="term" value="C:chloroplast thylakoid membrane"/>
    <property type="evidence" value="ECO:0007669"/>
    <property type="project" value="UniProtKB-SubCell"/>
</dbReference>
<dbReference type="GO" id="GO:0019898">
    <property type="term" value="C:extrinsic component of membrane"/>
    <property type="evidence" value="ECO:0007669"/>
    <property type="project" value="InterPro"/>
</dbReference>
<dbReference type="GO" id="GO:0009654">
    <property type="term" value="C:photosystem II oxygen evolving complex"/>
    <property type="evidence" value="ECO:0007669"/>
    <property type="project" value="InterPro"/>
</dbReference>
<dbReference type="GO" id="GO:0005509">
    <property type="term" value="F:calcium ion binding"/>
    <property type="evidence" value="ECO:0007669"/>
    <property type="project" value="InterPro"/>
</dbReference>
<dbReference type="GO" id="GO:0015979">
    <property type="term" value="P:photosynthesis"/>
    <property type="evidence" value="ECO:0007669"/>
    <property type="project" value="UniProtKB-KW"/>
</dbReference>
<dbReference type="Gene3D" id="3.40.1000.10">
    <property type="entry name" value="Mog1/PsbP, alpha/beta/alpha sandwich"/>
    <property type="match status" value="1"/>
</dbReference>
<dbReference type="InterPro" id="IPR016123">
    <property type="entry name" value="Mog1/PsbP_a/b/a-sand"/>
</dbReference>
<dbReference type="InterPro" id="IPR002683">
    <property type="entry name" value="PsbP_C"/>
</dbReference>
<dbReference type="PANTHER" id="PTHR31407">
    <property type="match status" value="1"/>
</dbReference>
<dbReference type="PANTHER" id="PTHR31407:SF6">
    <property type="entry name" value="OXYGEN-EVOLVING ENHANCER PROTEIN 2-1, CHLOROPLASTIC"/>
    <property type="match status" value="1"/>
</dbReference>
<dbReference type="Pfam" id="PF01789">
    <property type="entry name" value="PsbP"/>
    <property type="match status" value="1"/>
</dbReference>
<dbReference type="SUPFAM" id="SSF55724">
    <property type="entry name" value="Mog1p/PsbP-like"/>
    <property type="match status" value="1"/>
</dbReference>
<gene>
    <name type="primary">PSBP</name>
</gene>
<sequence length="265" mass="28521">MASTACFLHHHAPSPATSNLSRTRSATNRDEQQQEHSARLQSPEADCATENDALLSRRLALTILIGGAALGSRVSAADAAYGESANVFGKPKTNTDFQTVTGDGFKILIPSKWNPSKEVEFPGQVLRYEDNFDTTSNVGVMVNPTDKKSIKDYGSPEQFLSQVDYLLGKQAYFGKTISEGGFEPNAVRTANILETSTPVVGGKDYYSIHVLTRTADGDEGGKHLLITATVSDGKLYICKAQAGDKRWFKGAKKFVESAASSFSAA</sequence>
<comment type="function">
    <text>May be involved in the regulation of photosystem II.</text>
</comment>
<comment type="subcellular location">
    <subcellularLocation>
        <location>Plastid</location>
        <location>Chloroplast thylakoid membrane</location>
    </subcellularLocation>
    <text>Associated with the photosystem II complex.</text>
</comment>
<comment type="similarity">
    <text evidence="3">Belongs to the PsbP family.</text>
</comment>
<feature type="transit peptide" description="Chloroplast" evidence="1">
    <location>
        <begin position="1"/>
        <end position="69"/>
    </location>
</feature>
<feature type="chain" id="PRO_0000029578" description="Oxygen-evolving enhancer protein 2, chloroplastic">
    <location>
        <begin position="70"/>
        <end position="265"/>
    </location>
</feature>
<feature type="region of interest" description="Disordered" evidence="2">
    <location>
        <begin position="11"/>
        <end position="45"/>
    </location>
</feature>
<feature type="compositionally biased region" description="Polar residues" evidence="2">
    <location>
        <begin position="15"/>
        <end position="26"/>
    </location>
</feature>
<feature type="compositionally biased region" description="Basic and acidic residues" evidence="2">
    <location>
        <begin position="27"/>
        <end position="38"/>
    </location>
</feature>
<keyword id="KW-0150">Chloroplast</keyword>
<keyword id="KW-0472">Membrane</keyword>
<keyword id="KW-0602">Photosynthesis</keyword>
<keyword id="KW-0604">Photosystem II</keyword>
<keyword id="KW-0934">Plastid</keyword>
<keyword id="KW-0793">Thylakoid</keyword>
<keyword id="KW-0809">Transit peptide</keyword>